<protein>
    <recommendedName>
        <fullName>Early nodulin-36A</fullName>
        <shortName>N-36A</shortName>
    </recommendedName>
</protein>
<dbReference type="EMBL" id="D13503">
    <property type="protein sequence ID" value="BAA02721.1"/>
    <property type="molecule type" value="mRNA"/>
</dbReference>
<dbReference type="PIR" id="S34798">
    <property type="entry name" value="S34798"/>
</dbReference>
<dbReference type="RefSeq" id="NP_001237636.1">
    <property type="nucleotide sequence ID" value="NM_001250707.2"/>
</dbReference>
<dbReference type="SMR" id="Q02918"/>
<dbReference type="PaxDb" id="3847-GLYMA01G03470.1"/>
<dbReference type="EnsemblPlants" id="KRH74564">
    <property type="protein sequence ID" value="KRH74564"/>
    <property type="gene ID" value="GLYMA_01G028500"/>
</dbReference>
<dbReference type="GeneID" id="547771"/>
<dbReference type="Gramene" id="KRH74564">
    <property type="protein sequence ID" value="KRH74564"/>
    <property type="gene ID" value="GLYMA_01G028500"/>
</dbReference>
<dbReference type="KEGG" id="gmx:547771"/>
<dbReference type="HOGENOM" id="CLU_2445152_0_0_1"/>
<dbReference type="InParanoid" id="Q02918"/>
<dbReference type="OMA" id="VTKRQWT"/>
<dbReference type="OrthoDB" id="1421243at2759"/>
<dbReference type="Proteomes" id="UP000008827">
    <property type="component" value="Chromosome 1"/>
</dbReference>
<dbReference type="GO" id="GO:0009877">
    <property type="term" value="P:nodulation"/>
    <property type="evidence" value="ECO:0007669"/>
    <property type="project" value="UniProtKB-KW"/>
</dbReference>
<reference key="1">
    <citation type="journal article" date="1993" name="Mol. Gen. Genet.">
        <title>Isolation and characterization of novel nodulin cDNAs representing genes expressed at early stages of soybean nodule development.</title>
        <authorList>
            <person name="Kouchi H."/>
            <person name="Hata S."/>
        </authorList>
    </citation>
    <scope>NUCLEOTIDE SEQUENCE [MRNA]</scope>
    <source>
        <strain>cv. Akisengoku</strain>
    </source>
</reference>
<name>NO36A_SOYBN</name>
<organism>
    <name type="scientific">Glycine max</name>
    <name type="common">Soybean</name>
    <name type="synonym">Glycine hispida</name>
    <dbReference type="NCBI Taxonomy" id="3847"/>
    <lineage>
        <taxon>Eukaryota</taxon>
        <taxon>Viridiplantae</taxon>
        <taxon>Streptophyta</taxon>
        <taxon>Embryophyta</taxon>
        <taxon>Tracheophyta</taxon>
        <taxon>Spermatophyta</taxon>
        <taxon>Magnoliopsida</taxon>
        <taxon>eudicotyledons</taxon>
        <taxon>Gunneridae</taxon>
        <taxon>Pentapetalae</taxon>
        <taxon>rosids</taxon>
        <taxon>fabids</taxon>
        <taxon>Fabales</taxon>
        <taxon>Fabaceae</taxon>
        <taxon>Papilionoideae</taxon>
        <taxon>50 kb inversion clade</taxon>
        <taxon>NPAAA clade</taxon>
        <taxon>indigoferoid/millettioid clade</taxon>
        <taxon>Phaseoleae</taxon>
        <taxon>Glycine</taxon>
        <taxon>Glycine subgen. Soja</taxon>
    </lineage>
</organism>
<sequence>MEIKGCERVLTTHTPPLKTVCFGLALASLINKGCVLTFSLEWQKQICILQRRRGFGYSLANRQVTKRQWTPLGSLWLSIAHLCSSSCCRM</sequence>
<accession>Q02918</accession>
<comment type="developmental stage">
    <text>Expressed at early stages of nodule development.</text>
</comment>
<keyword id="KW-0536">Nodulation</keyword>
<keyword id="KW-1185">Reference proteome</keyword>
<feature type="chain" id="PRO_0000213733" description="Early nodulin-36A">
    <location>
        <begin position="1"/>
        <end position="90"/>
    </location>
</feature>
<proteinExistence type="evidence at transcript level"/>